<comment type="subcellular location">
    <subcellularLocation>
        <location evidence="2">Cell membrane</location>
        <topology evidence="2">Multi-pass membrane protein</topology>
    </subcellularLocation>
</comment>
<comment type="sequence caution" evidence="2">
    <conflict type="erroneous initiation">
        <sequence resource="EMBL-CDS" id="CAA80626"/>
    </conflict>
</comment>
<feature type="chain" id="PRO_0000207112" description="Uncharacterized protein CA_C1301">
    <location>
        <begin position="1"/>
        <end position="296"/>
    </location>
</feature>
<feature type="transmembrane region" description="Helical" evidence="1">
    <location>
        <begin position="10"/>
        <end position="29"/>
    </location>
</feature>
<feature type="transmembrane region" description="Helical" evidence="1">
    <location>
        <begin position="36"/>
        <end position="58"/>
    </location>
</feature>
<feature type="transmembrane region" description="Helical" evidence="1">
    <location>
        <begin position="112"/>
        <end position="131"/>
    </location>
</feature>
<feature type="transmembrane region" description="Helical" evidence="1">
    <location>
        <begin position="188"/>
        <end position="210"/>
    </location>
</feature>
<feature type="transmembrane region" description="Helical" evidence="1">
    <location>
        <begin position="241"/>
        <end position="260"/>
    </location>
</feature>
<feature type="transmembrane region" description="Helical" evidence="1">
    <location>
        <begin position="273"/>
        <end position="295"/>
    </location>
</feature>
<feature type="sequence conflict" description="In Ref. 2; CAA80626." evidence="2" ref="2">
    <original>GA</original>
    <variation>EL</variation>
    <location>
        <begin position="244"/>
        <end position="245"/>
    </location>
</feature>
<organism>
    <name type="scientific">Clostridium acetobutylicum (strain ATCC 824 / DSM 792 / JCM 1419 / IAM 19013 / LMG 5710 / NBRC 13948 / NRRL B-527 / VKM B-1787 / 2291 / W)</name>
    <dbReference type="NCBI Taxonomy" id="272562"/>
    <lineage>
        <taxon>Bacteria</taxon>
        <taxon>Bacillati</taxon>
        <taxon>Bacillota</taxon>
        <taxon>Clostridia</taxon>
        <taxon>Eubacteriales</taxon>
        <taxon>Clostridiaceae</taxon>
        <taxon>Clostridium</taxon>
    </lineage>
</organism>
<name>Y1301_CLOAB</name>
<evidence type="ECO:0000255" key="1"/>
<evidence type="ECO:0000305" key="2"/>
<protein>
    <recommendedName>
        <fullName>Uncharacterized protein CA_C1301</fullName>
    </recommendedName>
</protein>
<gene>
    <name type="ordered locus">CA_C1301</name>
</gene>
<keyword id="KW-1003">Cell membrane</keyword>
<keyword id="KW-0472">Membrane</keyword>
<keyword id="KW-1185">Reference proteome</keyword>
<keyword id="KW-0812">Transmembrane</keyword>
<keyword id="KW-1133">Transmembrane helix</keyword>
<reference key="1">
    <citation type="journal article" date="2001" name="J. Bacteriol.">
        <title>Genome sequence and comparative analysis of the solvent-producing bacterium Clostridium acetobutylicum.</title>
        <authorList>
            <person name="Noelling J."/>
            <person name="Breton G."/>
            <person name="Omelchenko M.V."/>
            <person name="Makarova K.S."/>
            <person name="Zeng Q."/>
            <person name="Gibson R."/>
            <person name="Lee H.M."/>
            <person name="Dubois J."/>
            <person name="Qiu D."/>
            <person name="Hitti J."/>
            <person name="Wolf Y.I."/>
            <person name="Tatusov R.L."/>
            <person name="Sabathe F."/>
            <person name="Doucette-Stamm L.A."/>
            <person name="Soucaille P."/>
            <person name="Daly M.J."/>
            <person name="Bennett G.N."/>
            <person name="Koonin E.V."/>
            <person name="Smith D.R."/>
        </authorList>
    </citation>
    <scope>NUCLEOTIDE SEQUENCE [LARGE SCALE GENOMIC DNA]</scope>
    <source>
        <strain>ATCC 824 / DSM 792 / JCM 1419 / IAM 19013 / LMG 5710 / NBRC 13948 / NRRL B-527 / VKM B-1787 / 2291 / W</strain>
    </source>
</reference>
<reference key="2">
    <citation type="journal article" date="1994" name="J. Bacteriol.">
        <title>Sporulation and primary sigma factor homologous genes in Clostridium acetobutylicum.</title>
        <authorList>
            <person name="Sauer U."/>
            <person name="Treuner A."/>
            <person name="Buchholz M."/>
            <person name="Santangelo J.D."/>
            <person name="Durre P."/>
        </authorList>
    </citation>
    <scope>NUCLEOTIDE SEQUENCE [GENOMIC DNA] OF 1-245</scope>
    <source>
        <strain>ATCC 824 / DSM 792 / JCM 1419 / IAM 19013 / LMG 5710 / NBRC 13948 / NRRL B-527 / VKM B-1787 / 2291 / W</strain>
    </source>
</reference>
<accession>P33659</accession>
<dbReference type="EMBL" id="AE001437">
    <property type="protein sequence ID" value="AAK79272.1"/>
    <property type="molecule type" value="Genomic_DNA"/>
</dbReference>
<dbReference type="EMBL" id="Z23080">
    <property type="protein sequence ID" value="CAA80626.1"/>
    <property type="status" value="ALT_INIT"/>
    <property type="molecule type" value="Genomic_DNA"/>
</dbReference>
<dbReference type="PIR" id="E97060">
    <property type="entry name" value="E97060"/>
</dbReference>
<dbReference type="RefSeq" id="NP_347932.1">
    <property type="nucleotide sequence ID" value="NC_003030.1"/>
</dbReference>
<dbReference type="RefSeq" id="WP_010964613.1">
    <property type="nucleotide sequence ID" value="NC_003030.1"/>
</dbReference>
<dbReference type="STRING" id="272562.CA_C1301"/>
<dbReference type="KEGG" id="cac:CA_C1301"/>
<dbReference type="PATRIC" id="fig|272562.8.peg.1502"/>
<dbReference type="eggNOG" id="ENOG50332EX">
    <property type="taxonomic scope" value="Bacteria"/>
</dbReference>
<dbReference type="HOGENOM" id="CLU_939108_0_0_9"/>
<dbReference type="OrthoDB" id="1932057at2"/>
<dbReference type="Proteomes" id="UP000000814">
    <property type="component" value="Chromosome"/>
</dbReference>
<dbReference type="GO" id="GO:0005886">
    <property type="term" value="C:plasma membrane"/>
    <property type="evidence" value="ECO:0007669"/>
    <property type="project" value="UniProtKB-SubCell"/>
</dbReference>
<dbReference type="InterPro" id="IPR027783">
    <property type="entry name" value="Bacterial_PH-related"/>
</dbReference>
<dbReference type="Pfam" id="PF10882">
    <property type="entry name" value="bPH_5"/>
    <property type="match status" value="1"/>
</dbReference>
<proteinExistence type="predicted"/>
<sequence length="296" mass="35190">MEYIKPHKGFSTLIILGITLGIDLIFSLLSTFINTYIVLRILEIFIVFFNIYQLYYILKSLTLKYCYDNENFYVLWCFGIRRVTIPFKEIEAYNVSHGEIKGVKLWGYGRNFFALGTFSVNDIGIVNMFVTATKNVIYIKCNSSIYGISPEKCDEVKNFLEKRKLVLKNWTYEKRNKVSLSKDRHFDILIFLISIVILMVTIIPFILYLRGVMPHKMPLSFDSNFKPMIYGTSREFAFKHMMYGAYNMIIFFCIYYSAYFYARYSKKLAYRLMYISFLVAFIFLIFQFKIYVTYIH</sequence>